<dbReference type="EMBL" id="CM003152">
    <property type="protein sequence ID" value="KIS67563.1"/>
    <property type="molecule type" value="Genomic_DNA"/>
</dbReference>
<dbReference type="RefSeq" id="XP_011390936.1">
    <property type="nucleotide sequence ID" value="XM_011392634.1"/>
</dbReference>
<dbReference type="SMR" id="Q4P5F5"/>
<dbReference type="STRING" id="237631.Q4P5F5"/>
<dbReference type="EnsemblFungi" id="KIS67563">
    <property type="protein sequence ID" value="KIS67563"/>
    <property type="gene ID" value="UMAG_04658"/>
</dbReference>
<dbReference type="GeneID" id="23564767"/>
<dbReference type="KEGG" id="uma:UMAG_04658"/>
<dbReference type="VEuPathDB" id="FungiDB:UMAG_04658"/>
<dbReference type="eggNOG" id="KOG0645">
    <property type="taxonomic scope" value="Eukaryota"/>
</dbReference>
<dbReference type="HOGENOM" id="CLU_000288_57_8_1"/>
<dbReference type="InParanoid" id="Q4P5F5"/>
<dbReference type="OMA" id="MPILASC"/>
<dbReference type="OrthoDB" id="284782at2759"/>
<dbReference type="Proteomes" id="UP000000561">
    <property type="component" value="Chromosome 13"/>
</dbReference>
<dbReference type="GO" id="GO:0097361">
    <property type="term" value="C:cytosolic [4Fe-4S] assembly targeting complex"/>
    <property type="evidence" value="ECO:0000318"/>
    <property type="project" value="GO_Central"/>
</dbReference>
<dbReference type="GO" id="GO:0016226">
    <property type="term" value="P:iron-sulfur cluster assembly"/>
    <property type="evidence" value="ECO:0000318"/>
    <property type="project" value="GO_Central"/>
</dbReference>
<dbReference type="CDD" id="cd00200">
    <property type="entry name" value="WD40"/>
    <property type="match status" value="1"/>
</dbReference>
<dbReference type="FunFam" id="2.130.10.10:FF:000705">
    <property type="entry name" value="Probable cytosolic iron-sulfur protein assembly protein 1"/>
    <property type="match status" value="1"/>
</dbReference>
<dbReference type="Gene3D" id="2.130.10.10">
    <property type="entry name" value="YVTN repeat-like/Quinoprotein amine dehydrogenase"/>
    <property type="match status" value="1"/>
</dbReference>
<dbReference type="HAMAP" id="MF_03037">
    <property type="entry name" value="ciao1"/>
    <property type="match status" value="1"/>
</dbReference>
<dbReference type="InterPro" id="IPR028608">
    <property type="entry name" value="CIAO1/Cia1"/>
</dbReference>
<dbReference type="InterPro" id="IPR020472">
    <property type="entry name" value="G-protein_beta_WD-40_rep"/>
</dbReference>
<dbReference type="InterPro" id="IPR015943">
    <property type="entry name" value="WD40/YVTN_repeat-like_dom_sf"/>
</dbReference>
<dbReference type="InterPro" id="IPR019775">
    <property type="entry name" value="WD40_repeat_CS"/>
</dbReference>
<dbReference type="InterPro" id="IPR036322">
    <property type="entry name" value="WD40_repeat_dom_sf"/>
</dbReference>
<dbReference type="InterPro" id="IPR001680">
    <property type="entry name" value="WD40_rpt"/>
</dbReference>
<dbReference type="PANTHER" id="PTHR19920:SF0">
    <property type="entry name" value="CYTOSOLIC IRON-SULFUR PROTEIN ASSEMBLY PROTEIN CIAO1-RELATED"/>
    <property type="match status" value="1"/>
</dbReference>
<dbReference type="PANTHER" id="PTHR19920">
    <property type="entry name" value="WD40 PROTEIN CIAO1"/>
    <property type="match status" value="1"/>
</dbReference>
<dbReference type="Pfam" id="PF00400">
    <property type="entry name" value="WD40"/>
    <property type="match status" value="6"/>
</dbReference>
<dbReference type="PRINTS" id="PR00320">
    <property type="entry name" value="GPROTEINBRPT"/>
</dbReference>
<dbReference type="SMART" id="SM00320">
    <property type="entry name" value="WD40"/>
    <property type="match status" value="7"/>
</dbReference>
<dbReference type="SUPFAM" id="SSF50978">
    <property type="entry name" value="WD40 repeat-like"/>
    <property type="match status" value="1"/>
</dbReference>
<dbReference type="PROSITE" id="PS00678">
    <property type="entry name" value="WD_REPEATS_1"/>
    <property type="match status" value="1"/>
</dbReference>
<dbReference type="PROSITE" id="PS50082">
    <property type="entry name" value="WD_REPEATS_2"/>
    <property type="match status" value="5"/>
</dbReference>
<dbReference type="PROSITE" id="PS50294">
    <property type="entry name" value="WD_REPEATS_REGION"/>
    <property type="match status" value="1"/>
</dbReference>
<comment type="function">
    <text evidence="1">Essential component of the cytosolic iron-sulfur (Fe/S) protein assembly machinery. Required for the maturation of extramitochondrial Fe/S proteins.</text>
</comment>
<comment type="similarity">
    <text evidence="1">Belongs to the WD repeat CIA1 family.</text>
</comment>
<feature type="chain" id="PRO_0000382527" description="Probable cytosolic iron-sulfur protein assembly protein 1">
    <location>
        <begin position="1"/>
        <end position="455"/>
    </location>
</feature>
<feature type="repeat" description="WD 1">
    <location>
        <begin position="31"/>
        <end position="70"/>
    </location>
</feature>
<feature type="repeat" description="WD 2">
    <location>
        <begin position="90"/>
        <end position="129"/>
    </location>
</feature>
<feature type="repeat" description="WD 3">
    <location>
        <begin position="163"/>
        <end position="202"/>
    </location>
</feature>
<feature type="repeat" description="WD 4">
    <location>
        <begin position="208"/>
        <end position="247"/>
    </location>
</feature>
<feature type="repeat" description="WD 5">
    <location>
        <begin position="253"/>
        <end position="292"/>
    </location>
</feature>
<feature type="repeat" description="WD 6">
    <location>
        <begin position="318"/>
        <end position="365"/>
    </location>
</feature>
<feature type="repeat" description="WD 7">
    <location>
        <begin position="380"/>
        <end position="453"/>
    </location>
</feature>
<keyword id="KW-1185">Reference proteome</keyword>
<keyword id="KW-0677">Repeat</keyword>
<keyword id="KW-0853">WD repeat</keyword>
<organism>
    <name type="scientific">Mycosarcoma maydis</name>
    <name type="common">Corn smut fungus</name>
    <name type="synonym">Ustilago maydis</name>
    <dbReference type="NCBI Taxonomy" id="5270"/>
    <lineage>
        <taxon>Eukaryota</taxon>
        <taxon>Fungi</taxon>
        <taxon>Dikarya</taxon>
        <taxon>Basidiomycota</taxon>
        <taxon>Ustilaginomycotina</taxon>
        <taxon>Ustilaginomycetes</taxon>
        <taxon>Ustilaginales</taxon>
        <taxon>Ustilaginaceae</taxon>
        <taxon>Mycosarcoma</taxon>
    </lineage>
</organism>
<gene>
    <name evidence="1" type="primary">CIA1</name>
    <name type="ORF">UMAG_04658</name>
</gene>
<accession>Q4P5F5</accession>
<accession>A0A0D1CLJ0</accession>
<sequence length="455" mass="49199">MTTMTTAAAKAAEPTRTTAIASLHLLAELEGHSSRAWHLAWNPRMPILASCSGDKDVRLHAYSFVSTTSAQGASTCKHPSFNLREVIPTGHQRTVRQVAWSPDGKILATASFDSTVGIWERIQDIDGSSELQGNTDASGPVVLSNGGAHVDEPEWDCVGTLEGHESECKSVAFSYTGGVLASCSRDKSVWIWEVQPDAEFECLSVLMEHSQDVKVVAWHPNDEVLASASYDDAIKLYIDDPSDDWFCYTTLTGHESTVWSISFSPCGNYLASASDDLTVRIWRRLDADQCEAHGLRPEGKMAGRRGEKWIAVNILNGYHDRTVYSVSWGVDKTSTRPGNLGRIASGGGDGRICVYEVTASDDEKSLQPKVELIAKMERAHASADVNCVSWAPESLNARGGTTAKIEQLTDEGETLNKGGQHASHELMSDMLASAGDDGSVKVWTLASSAYAATSK</sequence>
<protein>
    <recommendedName>
        <fullName evidence="1">Probable cytosolic iron-sulfur protein assembly protein 1</fullName>
    </recommendedName>
</protein>
<proteinExistence type="inferred from homology"/>
<evidence type="ECO:0000255" key="1">
    <source>
        <dbReference type="HAMAP-Rule" id="MF_03037"/>
    </source>
</evidence>
<reference key="1">
    <citation type="journal article" date="2006" name="Nature">
        <title>Insights from the genome of the biotrophic fungal plant pathogen Ustilago maydis.</title>
        <authorList>
            <person name="Kaemper J."/>
            <person name="Kahmann R."/>
            <person name="Boelker M."/>
            <person name="Ma L.-J."/>
            <person name="Brefort T."/>
            <person name="Saville B.J."/>
            <person name="Banuett F."/>
            <person name="Kronstad J.W."/>
            <person name="Gold S.E."/>
            <person name="Mueller O."/>
            <person name="Perlin M.H."/>
            <person name="Woesten H.A.B."/>
            <person name="de Vries R."/>
            <person name="Ruiz-Herrera J."/>
            <person name="Reynaga-Pena C.G."/>
            <person name="Snetselaar K."/>
            <person name="McCann M."/>
            <person name="Perez-Martin J."/>
            <person name="Feldbruegge M."/>
            <person name="Basse C.W."/>
            <person name="Steinberg G."/>
            <person name="Ibeas J.I."/>
            <person name="Holloman W."/>
            <person name="Guzman P."/>
            <person name="Farman M.L."/>
            <person name="Stajich J.E."/>
            <person name="Sentandreu R."/>
            <person name="Gonzalez-Prieto J.M."/>
            <person name="Kennell J.C."/>
            <person name="Molina L."/>
            <person name="Schirawski J."/>
            <person name="Mendoza-Mendoza A."/>
            <person name="Greilinger D."/>
            <person name="Muench K."/>
            <person name="Roessel N."/>
            <person name="Scherer M."/>
            <person name="Vranes M."/>
            <person name="Ladendorf O."/>
            <person name="Vincon V."/>
            <person name="Fuchs U."/>
            <person name="Sandrock B."/>
            <person name="Meng S."/>
            <person name="Ho E.C.H."/>
            <person name="Cahill M.J."/>
            <person name="Boyce K.J."/>
            <person name="Klose J."/>
            <person name="Klosterman S.J."/>
            <person name="Deelstra H.J."/>
            <person name="Ortiz-Castellanos L."/>
            <person name="Li W."/>
            <person name="Sanchez-Alonso P."/>
            <person name="Schreier P.H."/>
            <person name="Haeuser-Hahn I."/>
            <person name="Vaupel M."/>
            <person name="Koopmann E."/>
            <person name="Friedrich G."/>
            <person name="Voss H."/>
            <person name="Schlueter T."/>
            <person name="Margolis J."/>
            <person name="Platt D."/>
            <person name="Swimmer C."/>
            <person name="Gnirke A."/>
            <person name="Chen F."/>
            <person name="Vysotskaia V."/>
            <person name="Mannhaupt G."/>
            <person name="Gueldener U."/>
            <person name="Muensterkoetter M."/>
            <person name="Haase D."/>
            <person name="Oesterheld M."/>
            <person name="Mewes H.-W."/>
            <person name="Mauceli E.W."/>
            <person name="DeCaprio D."/>
            <person name="Wade C.M."/>
            <person name="Butler J."/>
            <person name="Young S.K."/>
            <person name="Jaffe D.B."/>
            <person name="Calvo S.E."/>
            <person name="Nusbaum C."/>
            <person name="Galagan J.E."/>
            <person name="Birren B.W."/>
        </authorList>
    </citation>
    <scope>NUCLEOTIDE SEQUENCE [LARGE SCALE GENOMIC DNA]</scope>
    <source>
        <strain>DSM 14603 / FGSC 9021 / UM521</strain>
    </source>
</reference>
<reference key="2">
    <citation type="submission" date="2014-09" db="EMBL/GenBank/DDBJ databases">
        <authorList>
            <person name="Gueldener U."/>
            <person name="Muensterkoetter M."/>
            <person name="Walter M.C."/>
            <person name="Mannhaupt G."/>
            <person name="Kahmann R."/>
        </authorList>
    </citation>
    <scope>GENOME REANNOTATION</scope>
    <source>
        <strain>DSM 14603 / FGSC 9021 / UM521</strain>
    </source>
</reference>
<name>CIAO1_MYCMD</name>